<organism>
    <name type="scientific">Bacteroides thetaiotaomicron (strain ATCC 29148 / DSM 2079 / JCM 5827 / CCUG 10774 / NCTC 10582 / VPI-5482 / E50)</name>
    <dbReference type="NCBI Taxonomy" id="226186"/>
    <lineage>
        <taxon>Bacteria</taxon>
        <taxon>Pseudomonadati</taxon>
        <taxon>Bacteroidota</taxon>
        <taxon>Bacteroidia</taxon>
        <taxon>Bacteroidales</taxon>
        <taxon>Bacteroidaceae</taxon>
        <taxon>Bacteroides</taxon>
    </lineage>
</organism>
<feature type="chain" id="PRO_0000119509" description="Glutamate--tRNA ligase">
    <location>
        <begin position="1"/>
        <end position="504"/>
    </location>
</feature>
<feature type="short sequence motif" description="'HIGH' region" evidence="1">
    <location>
        <begin position="12"/>
        <end position="22"/>
    </location>
</feature>
<feature type="short sequence motif" description="'KMSKS' region" evidence="1">
    <location>
        <begin position="260"/>
        <end position="264"/>
    </location>
</feature>
<feature type="binding site" evidence="1">
    <location>
        <position position="263"/>
    </location>
    <ligand>
        <name>ATP</name>
        <dbReference type="ChEBI" id="CHEBI:30616"/>
    </ligand>
</feature>
<name>SYE_BACTN</name>
<reference key="1">
    <citation type="journal article" date="2003" name="Science">
        <title>A genomic view of the human-Bacteroides thetaiotaomicron symbiosis.</title>
        <authorList>
            <person name="Xu J."/>
            <person name="Bjursell M.K."/>
            <person name="Himrod J."/>
            <person name="Deng S."/>
            <person name="Carmichael L.K."/>
            <person name="Chiang H.C."/>
            <person name="Hooper L.V."/>
            <person name="Gordon J.I."/>
        </authorList>
    </citation>
    <scope>NUCLEOTIDE SEQUENCE [LARGE SCALE GENOMIC DNA]</scope>
    <source>
        <strain>ATCC 29148 / DSM 2079 / JCM 5827 / CCUG 10774 / NCTC 10582 / VPI-5482 / E50</strain>
    </source>
</reference>
<proteinExistence type="inferred from homology"/>
<comment type="function">
    <text evidence="1">Catalyzes the attachment of glutamate to tRNA(Glu) in a two-step reaction: glutamate is first activated by ATP to form Glu-AMP and then transferred to the acceptor end of tRNA(Glu).</text>
</comment>
<comment type="catalytic activity">
    <reaction evidence="1">
        <text>tRNA(Glu) + L-glutamate + ATP = L-glutamyl-tRNA(Glu) + AMP + diphosphate</text>
        <dbReference type="Rhea" id="RHEA:23540"/>
        <dbReference type="Rhea" id="RHEA-COMP:9663"/>
        <dbReference type="Rhea" id="RHEA-COMP:9680"/>
        <dbReference type="ChEBI" id="CHEBI:29985"/>
        <dbReference type="ChEBI" id="CHEBI:30616"/>
        <dbReference type="ChEBI" id="CHEBI:33019"/>
        <dbReference type="ChEBI" id="CHEBI:78442"/>
        <dbReference type="ChEBI" id="CHEBI:78520"/>
        <dbReference type="ChEBI" id="CHEBI:456215"/>
        <dbReference type="EC" id="6.1.1.17"/>
    </reaction>
</comment>
<comment type="subunit">
    <text evidence="1">Monomer.</text>
</comment>
<comment type="subcellular location">
    <subcellularLocation>
        <location evidence="1">Cytoplasm</location>
    </subcellularLocation>
</comment>
<comment type="similarity">
    <text evidence="1">Belongs to the class-I aminoacyl-tRNA synthetase family. Glutamate--tRNA ligase type 1 subfamily.</text>
</comment>
<keyword id="KW-0030">Aminoacyl-tRNA synthetase</keyword>
<keyword id="KW-0067">ATP-binding</keyword>
<keyword id="KW-0963">Cytoplasm</keyword>
<keyword id="KW-0436">Ligase</keyword>
<keyword id="KW-0547">Nucleotide-binding</keyword>
<keyword id="KW-0648">Protein biosynthesis</keyword>
<keyword id="KW-1185">Reference proteome</keyword>
<accession>Q8A455</accession>
<sequence>MAERKVRVRFAPSPTGALHIGGVRTALYNYLFARQHGGDLIFRIEDTDSNRFVPGAEEYILESFKWLGIHFDEGVSFGGEHGPYRQSERREIYKKYVQILLDNDKAYIAFDTPEELDAKRAEIANFQYDASTRGMMRNSLTMSKEEVDALIAEGKQYVVRFKIEPNEDVHVNDLIRGEVVINSSILDDKVLYKSADELPTYHLANIVDDHLMEVSHVIRGEEWLPSAPLHVLLYRAFGWEDTMPEFAHLPLLLKPEGNGKLSKRDGDRLGFPVFPLEWRPESGEVSSGYRESGYLPEAVINFLALLGWNPGNDQEVMSMDEMIKLFDIHRCSKSGAKFDYKKGIWFNHQYIQLKPNEEIAELFLPVLKEHGVEAPFEKVVTVVGMMKDRVSFIKELWDVCSFFFVAPAEYDEKTVKKRWKEDSAKCMTELAEVIAGIEDFSIEGQEKVVMDWIAEKGYHTGNIMNAFRLTLVGEGKGPHMFDISWVLGKEETLARMKRAVEVLK</sequence>
<evidence type="ECO:0000255" key="1">
    <source>
        <dbReference type="HAMAP-Rule" id="MF_00022"/>
    </source>
</evidence>
<dbReference type="EC" id="6.1.1.17" evidence="1"/>
<dbReference type="EMBL" id="AE015928">
    <property type="protein sequence ID" value="AAO77854.1"/>
    <property type="molecule type" value="Genomic_DNA"/>
</dbReference>
<dbReference type="RefSeq" id="NP_811660.1">
    <property type="nucleotide sequence ID" value="NC_004663.1"/>
</dbReference>
<dbReference type="RefSeq" id="WP_008765418.1">
    <property type="nucleotide sequence ID" value="NC_004663.1"/>
</dbReference>
<dbReference type="SMR" id="Q8A455"/>
<dbReference type="FunCoup" id="Q8A455">
    <property type="interactions" value="564"/>
</dbReference>
<dbReference type="STRING" id="226186.BT_2748"/>
<dbReference type="PaxDb" id="226186-BT_2748"/>
<dbReference type="EnsemblBacteria" id="AAO77854">
    <property type="protein sequence ID" value="AAO77854"/>
    <property type="gene ID" value="BT_2748"/>
</dbReference>
<dbReference type="GeneID" id="60923926"/>
<dbReference type="KEGG" id="bth:BT_2748"/>
<dbReference type="PATRIC" id="fig|226186.12.peg.2795"/>
<dbReference type="eggNOG" id="COG0008">
    <property type="taxonomic scope" value="Bacteria"/>
</dbReference>
<dbReference type="HOGENOM" id="CLU_015768_6_3_10"/>
<dbReference type="InParanoid" id="Q8A455"/>
<dbReference type="OrthoDB" id="9807503at2"/>
<dbReference type="Proteomes" id="UP000001414">
    <property type="component" value="Chromosome"/>
</dbReference>
<dbReference type="GO" id="GO:0005829">
    <property type="term" value="C:cytosol"/>
    <property type="evidence" value="ECO:0000318"/>
    <property type="project" value="GO_Central"/>
</dbReference>
<dbReference type="GO" id="GO:0005524">
    <property type="term" value="F:ATP binding"/>
    <property type="evidence" value="ECO:0007669"/>
    <property type="project" value="UniProtKB-UniRule"/>
</dbReference>
<dbReference type="GO" id="GO:0004818">
    <property type="term" value="F:glutamate-tRNA ligase activity"/>
    <property type="evidence" value="ECO:0000318"/>
    <property type="project" value="GO_Central"/>
</dbReference>
<dbReference type="GO" id="GO:0000049">
    <property type="term" value="F:tRNA binding"/>
    <property type="evidence" value="ECO:0007669"/>
    <property type="project" value="InterPro"/>
</dbReference>
<dbReference type="GO" id="GO:0008270">
    <property type="term" value="F:zinc ion binding"/>
    <property type="evidence" value="ECO:0007669"/>
    <property type="project" value="InterPro"/>
</dbReference>
<dbReference type="GO" id="GO:0006424">
    <property type="term" value="P:glutamyl-tRNA aminoacylation"/>
    <property type="evidence" value="ECO:0000318"/>
    <property type="project" value="GO_Central"/>
</dbReference>
<dbReference type="CDD" id="cd00808">
    <property type="entry name" value="GluRS_core"/>
    <property type="match status" value="1"/>
</dbReference>
<dbReference type="FunFam" id="1.10.10.350:FF:000005">
    <property type="entry name" value="Glutamate--tRNA ligase"/>
    <property type="match status" value="1"/>
</dbReference>
<dbReference type="FunFam" id="3.40.50.620:FF:000127">
    <property type="entry name" value="Glutamate--tRNA ligase"/>
    <property type="match status" value="1"/>
</dbReference>
<dbReference type="Gene3D" id="1.10.10.350">
    <property type="match status" value="1"/>
</dbReference>
<dbReference type="Gene3D" id="3.40.50.620">
    <property type="entry name" value="HUPs"/>
    <property type="match status" value="1"/>
</dbReference>
<dbReference type="HAMAP" id="MF_00022">
    <property type="entry name" value="Glu_tRNA_synth_type1"/>
    <property type="match status" value="1"/>
</dbReference>
<dbReference type="InterPro" id="IPR045462">
    <property type="entry name" value="aa-tRNA-synth_I_cd-bd"/>
</dbReference>
<dbReference type="InterPro" id="IPR020751">
    <property type="entry name" value="aa-tRNA-synth_I_codon-bd_sub2"/>
</dbReference>
<dbReference type="InterPro" id="IPR001412">
    <property type="entry name" value="aa-tRNA-synth_I_CS"/>
</dbReference>
<dbReference type="InterPro" id="IPR008925">
    <property type="entry name" value="aa_tRNA-synth_I_cd-bd_sf"/>
</dbReference>
<dbReference type="InterPro" id="IPR004527">
    <property type="entry name" value="Glu-tRNA-ligase_bac/mito"/>
</dbReference>
<dbReference type="InterPro" id="IPR000924">
    <property type="entry name" value="Glu/Gln-tRNA-synth"/>
</dbReference>
<dbReference type="InterPro" id="IPR020058">
    <property type="entry name" value="Glu/Gln-tRNA-synth_Ib_cat-dom"/>
</dbReference>
<dbReference type="InterPro" id="IPR049940">
    <property type="entry name" value="GluQ/Sye"/>
</dbReference>
<dbReference type="InterPro" id="IPR033910">
    <property type="entry name" value="GluRS_core"/>
</dbReference>
<dbReference type="InterPro" id="IPR014729">
    <property type="entry name" value="Rossmann-like_a/b/a_fold"/>
</dbReference>
<dbReference type="NCBIfam" id="TIGR00464">
    <property type="entry name" value="gltX_bact"/>
    <property type="match status" value="1"/>
</dbReference>
<dbReference type="PANTHER" id="PTHR43311">
    <property type="entry name" value="GLUTAMATE--TRNA LIGASE"/>
    <property type="match status" value="1"/>
</dbReference>
<dbReference type="PANTHER" id="PTHR43311:SF2">
    <property type="entry name" value="GLUTAMATE--TRNA LIGASE, MITOCHONDRIAL-RELATED"/>
    <property type="match status" value="1"/>
</dbReference>
<dbReference type="Pfam" id="PF19269">
    <property type="entry name" value="Anticodon_2"/>
    <property type="match status" value="1"/>
</dbReference>
<dbReference type="Pfam" id="PF00749">
    <property type="entry name" value="tRNA-synt_1c"/>
    <property type="match status" value="1"/>
</dbReference>
<dbReference type="PRINTS" id="PR00987">
    <property type="entry name" value="TRNASYNTHGLU"/>
</dbReference>
<dbReference type="SUPFAM" id="SSF48163">
    <property type="entry name" value="An anticodon-binding domain of class I aminoacyl-tRNA synthetases"/>
    <property type="match status" value="1"/>
</dbReference>
<dbReference type="SUPFAM" id="SSF52374">
    <property type="entry name" value="Nucleotidylyl transferase"/>
    <property type="match status" value="1"/>
</dbReference>
<dbReference type="PROSITE" id="PS00178">
    <property type="entry name" value="AA_TRNA_LIGASE_I"/>
    <property type="match status" value="1"/>
</dbReference>
<protein>
    <recommendedName>
        <fullName evidence="1">Glutamate--tRNA ligase</fullName>
        <ecNumber evidence="1">6.1.1.17</ecNumber>
    </recommendedName>
    <alternativeName>
        <fullName evidence="1">Glutamyl-tRNA synthetase</fullName>
        <shortName evidence="1">GluRS</shortName>
    </alternativeName>
</protein>
<gene>
    <name evidence="1" type="primary">gltX</name>
    <name type="ordered locus">BT_2748</name>
</gene>